<sequence length="229" mass="25399">QLHPLYLSGCPTTANCGSLGTPTNPALSCEHLKSVCADTASDFYYIESAGLYHKVFCEMDIEGGGWARYGRSNQGTTWNYVDEDAAEITLDIINASEVKEMTDLKYNRFLVQTDVVFKMKADDSVNPSRLTTRSLPWLEESPLFIPDYGNDHTRIEFPSGSVDRVTCIPGSSSKCGQGGGLPTANGLSKPFFFQSLFFSPRGTGASAHNDQWNRNKYTWDGSYYFVYAK</sequence>
<dbReference type="SMR" id="C0HM36"/>
<dbReference type="GO" id="GO:0005576">
    <property type="term" value="C:extracellular region"/>
    <property type="evidence" value="ECO:0007669"/>
    <property type="project" value="UniProtKB-SubCell"/>
</dbReference>
<dbReference type="InterPro" id="IPR036056">
    <property type="entry name" value="Fibrinogen-like_C"/>
</dbReference>
<dbReference type="SUPFAM" id="SSF56496">
    <property type="entry name" value="Fibrinogen C-terminal domain-like"/>
    <property type="match status" value="1"/>
</dbReference>
<organism>
    <name type="scientific">Echinometra lucunter</name>
    <name type="common">Rock-boring urchin</name>
    <dbReference type="NCBI Taxonomy" id="105361"/>
    <lineage>
        <taxon>Eukaryota</taxon>
        <taxon>Metazoa</taxon>
        <taxon>Echinodermata</taxon>
        <taxon>Eleutherozoa</taxon>
        <taxon>Echinozoa</taxon>
        <taxon>Echinoidea</taxon>
        <taxon>Euechinoidea</taxon>
        <taxon>Echinacea</taxon>
        <taxon>Camarodonta</taxon>
        <taxon>Echinidea</taxon>
        <taxon>Echinometridae</taxon>
        <taxon>Echinometra</taxon>
    </lineage>
</organism>
<name>LEC1_ECHLU</name>
<protein>
    <recommendedName>
        <fullName evidence="5">Echinolectin 1</fullName>
    </recommendedName>
    <alternativeName>
        <fullName evidence="4">Echinometra lucunter lectin</fullName>
        <shortName evidence="4">ELL</shortName>
    </alternativeName>
    <alternativeName>
        <fullName evidence="4">Fibrinogen-related lectin</fullName>
    </alternativeName>
</protein>
<feature type="chain" id="PRO_0000456402" description="Echinolectin 1">
    <location>
        <begin position="1"/>
        <end position="229"/>
    </location>
</feature>
<feature type="glycosylation site" description="N-linked (GlcNAc...) asparagine" evidence="2">
    <location>
        <position position="94"/>
    </location>
</feature>
<feature type="unsure residue" description="N or D" evidence="3">
    <location>
        <position position="73"/>
    </location>
</feature>
<feature type="unsure residue" description="E or D" evidence="3">
    <location>
        <position position="140"/>
    </location>
</feature>
<feature type="unsure residue" description="S or T" evidence="3">
    <location>
        <position position="141"/>
    </location>
</feature>
<feature type="unsure residue" description="N or D" evidence="3">
    <location>
        <position position="185"/>
    </location>
</feature>
<comment type="subcellular location">
    <subcellularLocation>
        <location evidence="1">Secreted</location>
    </subcellularLocation>
</comment>
<comment type="mass spectrometry" mass="25377.0" error="10.0" method="MALDI" evidence="3"/>
<accession>C0HM36</accession>
<proteinExistence type="evidence at protein level"/>
<keyword id="KW-0903">Direct protein sequencing</keyword>
<keyword id="KW-0325">Glycoprotein</keyword>
<keyword id="KW-0964">Secreted</keyword>
<reference key="1">
    <citation type="submission" date="2022-05" db="UniProtKB">
        <title>A Fibrinogen-Related Lectin from Echinometra lucunter: a possible link between ancient FRePs and vertebrate intelectins.</title>
        <authorList>
            <person name="Lima D.P."/>
            <person name="Lopes A.A."/>
            <person name="Alves de V.M."/>
            <person name="Teixeira H.E."/>
            <person name="Shiniti N.C."/>
            <person name="Holanda S.A."/>
            <person name="Farias C.R."/>
        </authorList>
    </citation>
    <scope>PROTEIN SEQUENCE</scope>
    <scope>MASS SPECTROMETRY</scope>
</reference>
<evidence type="ECO:0000250" key="1">
    <source>
        <dbReference type="UniProtKB" id="P02678"/>
    </source>
</evidence>
<evidence type="ECO:0000255" key="2">
    <source>
        <dbReference type="PROSITE-ProRule" id="PRU00498"/>
    </source>
</evidence>
<evidence type="ECO:0000269" key="3">
    <source ref="1"/>
</evidence>
<evidence type="ECO:0000303" key="4">
    <source ref="1"/>
</evidence>
<evidence type="ECO:0000305" key="5"/>